<comment type="similarity">
    <text evidence="3">Belongs to the jasmonate-induced protein family.</text>
</comment>
<accession>P84980</accession>
<name>JIPH_POPEU</name>
<reference evidence="3" key="1">
    <citation type="thesis" date="2006" institute="ICAT-FCUL" country="Portugal">
        <title>Molecular analysis of Populus euphratica Oliv. response to moderate heat stress.</title>
        <authorList>
            <person name="Ferreira S."/>
        </authorList>
    </citation>
    <scope>PROTEIN SEQUENCE</scope>
    <source>
        <tissue evidence="1">Leaf</tissue>
    </source>
</reference>
<protein>
    <recommendedName>
        <fullName>Jasmonate-induced protein homolog</fullName>
    </recommendedName>
</protein>
<organism>
    <name type="scientific">Populus euphratica</name>
    <name type="common">Euphrates poplar</name>
    <dbReference type="NCBI Taxonomy" id="75702"/>
    <lineage>
        <taxon>Eukaryota</taxon>
        <taxon>Viridiplantae</taxon>
        <taxon>Streptophyta</taxon>
        <taxon>Embryophyta</taxon>
        <taxon>Tracheophyta</taxon>
        <taxon>Spermatophyta</taxon>
        <taxon>Magnoliopsida</taxon>
        <taxon>eudicotyledons</taxon>
        <taxon>Gunneridae</taxon>
        <taxon>Pentapetalae</taxon>
        <taxon>rosids</taxon>
        <taxon>fabids</taxon>
        <taxon>Malpighiales</taxon>
        <taxon>Salicaceae</taxon>
        <taxon>Saliceae</taxon>
        <taxon>Populus</taxon>
    </lineage>
</organism>
<feature type="chain" id="PRO_0000304523" description="Jasmonate-induced protein homolog">
    <location>
        <begin position="1" status="less than"/>
        <end position="18" status="greater than"/>
    </location>
</feature>
<feature type="non-terminal residue" evidence="2">
    <location>
        <position position="1"/>
    </location>
</feature>
<feature type="non-terminal residue" evidence="2">
    <location>
        <position position="18"/>
    </location>
</feature>
<proteinExistence type="evidence at protein level"/>
<evidence type="ECO:0000269" key="1">
    <source ref="1"/>
</evidence>
<evidence type="ECO:0000303" key="2">
    <source ref="1"/>
</evidence>
<evidence type="ECO:0000305" key="3"/>
<keyword id="KW-0903">Direct protein sequencing</keyword>
<keyword id="KW-1185">Reference proteome</keyword>
<dbReference type="Proteomes" id="UP000694918">
    <property type="component" value="Unplaced"/>
</dbReference>
<sequence>IDASTATGDSPVFTATIK</sequence>